<proteinExistence type="inferred from homology"/>
<accession>A9N2L7</accession>
<reference key="1">
    <citation type="submission" date="2007-11" db="EMBL/GenBank/DDBJ databases">
        <authorList>
            <consortium name="The Salmonella enterica serovar Paratyphi B Genome Sequencing Project"/>
            <person name="McClelland M."/>
            <person name="Sanderson E.K."/>
            <person name="Porwollik S."/>
            <person name="Spieth J."/>
            <person name="Clifton W.S."/>
            <person name="Fulton R."/>
            <person name="Cordes M."/>
            <person name="Wollam A."/>
            <person name="Shah N."/>
            <person name="Pepin K."/>
            <person name="Bhonagiri V."/>
            <person name="Nash W."/>
            <person name="Johnson M."/>
            <person name="Thiruvilangam P."/>
            <person name="Wilson R."/>
        </authorList>
    </citation>
    <scope>NUCLEOTIDE SEQUENCE [LARGE SCALE GENOMIC DNA]</scope>
    <source>
        <strain>ATCC BAA-1250 / SPB7</strain>
    </source>
</reference>
<protein>
    <recommendedName>
        <fullName evidence="1">Thymidylate synthase</fullName>
        <shortName evidence="1">TS</shortName>
        <shortName evidence="1">TSase</shortName>
        <ecNumber evidence="1">2.1.1.45</ecNumber>
    </recommendedName>
</protein>
<keyword id="KW-0963">Cytoplasm</keyword>
<keyword id="KW-0489">Methyltransferase</keyword>
<keyword id="KW-0545">Nucleotide biosynthesis</keyword>
<keyword id="KW-0808">Transferase</keyword>
<evidence type="ECO:0000255" key="1">
    <source>
        <dbReference type="HAMAP-Rule" id="MF_00008"/>
    </source>
</evidence>
<feature type="chain" id="PRO_1000073882" description="Thymidylate synthase">
    <location>
        <begin position="1"/>
        <end position="264"/>
    </location>
</feature>
<feature type="active site" description="Nucleophile" evidence="1">
    <location>
        <position position="146"/>
    </location>
</feature>
<feature type="binding site" description="in other chain" evidence="1">
    <location>
        <position position="21"/>
    </location>
    <ligand>
        <name>dUMP</name>
        <dbReference type="ChEBI" id="CHEBI:246422"/>
        <note>ligand shared between dimeric partners</note>
    </ligand>
</feature>
<feature type="binding site" evidence="1">
    <location>
        <position position="51"/>
    </location>
    <ligand>
        <name>(6R)-5,10-methylene-5,6,7,8-tetrahydrofolate</name>
        <dbReference type="ChEBI" id="CHEBI:15636"/>
    </ligand>
</feature>
<feature type="binding site" evidence="1">
    <location>
        <begin position="126"/>
        <end position="127"/>
    </location>
    <ligand>
        <name>dUMP</name>
        <dbReference type="ChEBI" id="CHEBI:246422"/>
        <note>ligand shared between dimeric partners</note>
    </ligand>
</feature>
<feature type="binding site" description="in other chain" evidence="1">
    <location>
        <begin position="166"/>
        <end position="169"/>
    </location>
    <ligand>
        <name>dUMP</name>
        <dbReference type="ChEBI" id="CHEBI:246422"/>
        <note>ligand shared between dimeric partners</note>
    </ligand>
</feature>
<feature type="binding site" evidence="1">
    <location>
        <position position="169"/>
    </location>
    <ligand>
        <name>(6R)-5,10-methylene-5,6,7,8-tetrahydrofolate</name>
        <dbReference type="ChEBI" id="CHEBI:15636"/>
    </ligand>
</feature>
<feature type="binding site" description="in other chain" evidence="1">
    <location>
        <position position="177"/>
    </location>
    <ligand>
        <name>dUMP</name>
        <dbReference type="ChEBI" id="CHEBI:246422"/>
        <note>ligand shared between dimeric partners</note>
    </ligand>
</feature>
<feature type="binding site" description="in other chain" evidence="1">
    <location>
        <begin position="207"/>
        <end position="209"/>
    </location>
    <ligand>
        <name>dUMP</name>
        <dbReference type="ChEBI" id="CHEBI:246422"/>
        <note>ligand shared between dimeric partners</note>
    </ligand>
</feature>
<feature type="binding site" evidence="1">
    <location>
        <position position="263"/>
    </location>
    <ligand>
        <name>(6R)-5,10-methylene-5,6,7,8-tetrahydrofolate</name>
        <dbReference type="ChEBI" id="CHEBI:15636"/>
    </ligand>
</feature>
<comment type="function">
    <text evidence="1">Catalyzes the reductive methylation of 2'-deoxyuridine-5'-monophosphate (dUMP) to 2'-deoxythymidine-5'-monophosphate (dTMP) while utilizing 5,10-methylenetetrahydrofolate (mTHF) as the methyl donor and reductant in the reaction, yielding dihydrofolate (DHF) as a by-product. This enzymatic reaction provides an intracellular de novo source of dTMP, an essential precursor for DNA biosynthesis.</text>
</comment>
<comment type="catalytic activity">
    <reaction evidence="1">
        <text>dUMP + (6R)-5,10-methylene-5,6,7,8-tetrahydrofolate = 7,8-dihydrofolate + dTMP</text>
        <dbReference type="Rhea" id="RHEA:12104"/>
        <dbReference type="ChEBI" id="CHEBI:15636"/>
        <dbReference type="ChEBI" id="CHEBI:57451"/>
        <dbReference type="ChEBI" id="CHEBI:63528"/>
        <dbReference type="ChEBI" id="CHEBI:246422"/>
        <dbReference type="EC" id="2.1.1.45"/>
    </reaction>
</comment>
<comment type="pathway">
    <text evidence="1">Pyrimidine metabolism; dTTP biosynthesis.</text>
</comment>
<comment type="subunit">
    <text evidence="1">Homodimer.</text>
</comment>
<comment type="subcellular location">
    <subcellularLocation>
        <location evidence="1">Cytoplasm</location>
    </subcellularLocation>
</comment>
<comment type="similarity">
    <text evidence="1">Belongs to the thymidylate synthase family. Bacterial-type ThyA subfamily.</text>
</comment>
<name>TYSY_SALPB</name>
<sequence length="264" mass="30369">MKQYLELMQKVLDEGTQKNDRTGTGTLSIFGHQMRFNLQEGFPLVTTKRCHLRSIIHELLWFLQGDTNIAYLHENNVTIWDEWADENGDLGPVYGKQWRAWPTPDGRHIDQIATVLSQLKNDPDSRRIIVSAWNVGELDKMALAPCHAFFQFYVADGKLSCQLYQRSCDVFLGLPFNIASYALLVHMMAQQCDLDVGDFVWTGGDTHLYSNHMEQTHLQLSREPRALPKLVIKRKPDSLFDYRFDDFEIEGYDPHPGIKAPVAI</sequence>
<dbReference type="EC" id="2.1.1.45" evidence="1"/>
<dbReference type="EMBL" id="CP000886">
    <property type="protein sequence ID" value="ABX69068.1"/>
    <property type="molecule type" value="Genomic_DNA"/>
</dbReference>
<dbReference type="RefSeq" id="WP_000816247.1">
    <property type="nucleotide sequence ID" value="NC_010102.1"/>
</dbReference>
<dbReference type="SMR" id="A9N2L7"/>
<dbReference type="KEGG" id="spq:SPAB_03733"/>
<dbReference type="PATRIC" id="fig|1016998.12.peg.3514"/>
<dbReference type="HOGENOM" id="CLU_021669_0_0_6"/>
<dbReference type="BioCyc" id="SENT1016998:SPAB_RS15205-MONOMER"/>
<dbReference type="UniPathway" id="UPA00575"/>
<dbReference type="Proteomes" id="UP000008556">
    <property type="component" value="Chromosome"/>
</dbReference>
<dbReference type="GO" id="GO:0005829">
    <property type="term" value="C:cytosol"/>
    <property type="evidence" value="ECO:0007669"/>
    <property type="project" value="TreeGrafter"/>
</dbReference>
<dbReference type="GO" id="GO:0004799">
    <property type="term" value="F:thymidylate synthase activity"/>
    <property type="evidence" value="ECO:0007669"/>
    <property type="project" value="UniProtKB-UniRule"/>
</dbReference>
<dbReference type="GO" id="GO:0006231">
    <property type="term" value="P:dTMP biosynthetic process"/>
    <property type="evidence" value="ECO:0007669"/>
    <property type="project" value="UniProtKB-UniRule"/>
</dbReference>
<dbReference type="GO" id="GO:0006235">
    <property type="term" value="P:dTTP biosynthetic process"/>
    <property type="evidence" value="ECO:0007669"/>
    <property type="project" value="UniProtKB-UniRule"/>
</dbReference>
<dbReference type="GO" id="GO:0032259">
    <property type="term" value="P:methylation"/>
    <property type="evidence" value="ECO:0007669"/>
    <property type="project" value="UniProtKB-KW"/>
</dbReference>
<dbReference type="CDD" id="cd00351">
    <property type="entry name" value="TS_Pyrimidine_HMase"/>
    <property type="match status" value="1"/>
</dbReference>
<dbReference type="FunFam" id="3.30.572.10:FF:000001">
    <property type="entry name" value="Thymidylate synthase"/>
    <property type="match status" value="1"/>
</dbReference>
<dbReference type="Gene3D" id="3.30.572.10">
    <property type="entry name" value="Thymidylate synthase/dCMP hydroxymethylase domain"/>
    <property type="match status" value="1"/>
</dbReference>
<dbReference type="HAMAP" id="MF_00008">
    <property type="entry name" value="Thymidy_synth_bact"/>
    <property type="match status" value="1"/>
</dbReference>
<dbReference type="InterPro" id="IPR045097">
    <property type="entry name" value="Thymidate_synth/dCMP_Mease"/>
</dbReference>
<dbReference type="InterPro" id="IPR023451">
    <property type="entry name" value="Thymidate_synth/dCMP_Mease_dom"/>
</dbReference>
<dbReference type="InterPro" id="IPR036926">
    <property type="entry name" value="Thymidate_synth/dCMP_Mease_sf"/>
</dbReference>
<dbReference type="InterPro" id="IPR000398">
    <property type="entry name" value="Thymidylate_synthase"/>
</dbReference>
<dbReference type="InterPro" id="IPR020940">
    <property type="entry name" value="Thymidylate_synthase_AS"/>
</dbReference>
<dbReference type="NCBIfam" id="NF002497">
    <property type="entry name" value="PRK01827.1-3"/>
    <property type="match status" value="1"/>
</dbReference>
<dbReference type="NCBIfam" id="NF002499">
    <property type="entry name" value="PRK01827.1-5"/>
    <property type="match status" value="1"/>
</dbReference>
<dbReference type="NCBIfam" id="TIGR03284">
    <property type="entry name" value="thym_sym"/>
    <property type="match status" value="2"/>
</dbReference>
<dbReference type="PANTHER" id="PTHR11548:SF9">
    <property type="entry name" value="THYMIDYLATE SYNTHASE"/>
    <property type="match status" value="1"/>
</dbReference>
<dbReference type="PANTHER" id="PTHR11548">
    <property type="entry name" value="THYMIDYLATE SYNTHASE 1"/>
    <property type="match status" value="1"/>
</dbReference>
<dbReference type="Pfam" id="PF00303">
    <property type="entry name" value="Thymidylat_synt"/>
    <property type="match status" value="1"/>
</dbReference>
<dbReference type="PRINTS" id="PR00108">
    <property type="entry name" value="THYMDSNTHASE"/>
</dbReference>
<dbReference type="SUPFAM" id="SSF55831">
    <property type="entry name" value="Thymidylate synthase/dCMP hydroxymethylase"/>
    <property type="match status" value="1"/>
</dbReference>
<dbReference type="PROSITE" id="PS00091">
    <property type="entry name" value="THYMIDYLATE_SYNTHASE"/>
    <property type="match status" value="1"/>
</dbReference>
<organism>
    <name type="scientific">Salmonella paratyphi B (strain ATCC BAA-1250 / SPB7)</name>
    <dbReference type="NCBI Taxonomy" id="1016998"/>
    <lineage>
        <taxon>Bacteria</taxon>
        <taxon>Pseudomonadati</taxon>
        <taxon>Pseudomonadota</taxon>
        <taxon>Gammaproteobacteria</taxon>
        <taxon>Enterobacterales</taxon>
        <taxon>Enterobacteriaceae</taxon>
        <taxon>Salmonella</taxon>
    </lineage>
</organism>
<gene>
    <name evidence="1" type="primary">thyA</name>
    <name type="ordered locus">SPAB_03733</name>
</gene>